<proteinExistence type="inferred from homology"/>
<accession>A0PT80</accession>
<evidence type="ECO:0000255" key="1">
    <source>
        <dbReference type="HAMAP-Rule" id="MF_00197"/>
    </source>
</evidence>
<name>DAPF_MYCUA</name>
<reference key="1">
    <citation type="journal article" date="2007" name="Genome Res.">
        <title>Reductive evolution and niche adaptation inferred from the genome of Mycobacterium ulcerans, the causative agent of Buruli ulcer.</title>
        <authorList>
            <person name="Stinear T.P."/>
            <person name="Seemann T."/>
            <person name="Pidot S."/>
            <person name="Frigui W."/>
            <person name="Reysset G."/>
            <person name="Garnier T."/>
            <person name="Meurice G."/>
            <person name="Simon D."/>
            <person name="Bouchier C."/>
            <person name="Ma L."/>
            <person name="Tichit M."/>
            <person name="Porter J.L."/>
            <person name="Ryan J."/>
            <person name="Johnson P.D.R."/>
            <person name="Davies J.K."/>
            <person name="Jenkin G.A."/>
            <person name="Small P.L.C."/>
            <person name="Jones L.M."/>
            <person name="Tekaia F."/>
            <person name="Laval F."/>
            <person name="Daffe M."/>
            <person name="Parkhill J."/>
            <person name="Cole S.T."/>
        </authorList>
    </citation>
    <scope>NUCLEOTIDE SEQUENCE [LARGE SCALE GENOMIC DNA]</scope>
    <source>
        <strain>Agy99</strain>
    </source>
</reference>
<comment type="function">
    <text evidence="1">Catalyzes the stereoinversion of LL-2,6-diaminopimelate (L,L-DAP) to meso-diaminopimelate (meso-DAP), a precursor of L-lysine and an essential component of the bacterial peptidoglycan.</text>
</comment>
<comment type="catalytic activity">
    <reaction evidence="1">
        <text>(2S,6S)-2,6-diaminopimelate = meso-2,6-diaminopimelate</text>
        <dbReference type="Rhea" id="RHEA:15393"/>
        <dbReference type="ChEBI" id="CHEBI:57609"/>
        <dbReference type="ChEBI" id="CHEBI:57791"/>
        <dbReference type="EC" id="5.1.1.7"/>
    </reaction>
</comment>
<comment type="pathway">
    <text evidence="1">Amino-acid biosynthesis; L-lysine biosynthesis via DAP pathway; DL-2,6-diaminopimelate from LL-2,6-diaminopimelate: step 1/1.</text>
</comment>
<comment type="subunit">
    <text evidence="1">Homodimer.</text>
</comment>
<comment type="subcellular location">
    <subcellularLocation>
        <location evidence="1">Cytoplasm</location>
    </subcellularLocation>
</comment>
<comment type="similarity">
    <text evidence="1">Belongs to the diaminopimelate epimerase family.</text>
</comment>
<gene>
    <name evidence="1" type="primary">dapF</name>
    <name type="ordered locus">MUL_3369</name>
</gene>
<protein>
    <recommendedName>
        <fullName evidence="1">Diaminopimelate epimerase</fullName>
        <shortName evidence="1">DAP epimerase</shortName>
        <ecNumber evidence="1">5.1.1.7</ecNumber>
    </recommendedName>
    <alternativeName>
        <fullName evidence="1">PLP-independent amino acid racemase</fullName>
    </alternativeName>
</protein>
<organism>
    <name type="scientific">Mycobacterium ulcerans (strain Agy99)</name>
    <dbReference type="NCBI Taxonomy" id="362242"/>
    <lineage>
        <taxon>Bacteria</taxon>
        <taxon>Bacillati</taxon>
        <taxon>Actinomycetota</taxon>
        <taxon>Actinomycetes</taxon>
        <taxon>Mycobacteriales</taxon>
        <taxon>Mycobacteriaceae</taxon>
        <taxon>Mycobacterium</taxon>
        <taxon>Mycobacterium ulcerans group</taxon>
    </lineage>
</organism>
<feature type="chain" id="PRO_1000011913" description="Diaminopimelate epimerase">
    <location>
        <begin position="1"/>
        <end position="290"/>
    </location>
</feature>
<feature type="active site" description="Proton donor" evidence="1">
    <location>
        <position position="87"/>
    </location>
</feature>
<feature type="active site" description="Proton acceptor" evidence="1">
    <location>
        <position position="226"/>
    </location>
</feature>
<feature type="binding site" evidence="1">
    <location>
        <position position="11"/>
    </location>
    <ligand>
        <name>substrate</name>
    </ligand>
</feature>
<feature type="binding site" evidence="1">
    <location>
        <position position="78"/>
    </location>
    <ligand>
        <name>substrate</name>
    </ligand>
</feature>
<feature type="binding site" evidence="1">
    <location>
        <begin position="88"/>
        <end position="89"/>
    </location>
    <ligand>
        <name>substrate</name>
    </ligand>
</feature>
<feature type="binding site" evidence="1">
    <location>
        <position position="163"/>
    </location>
    <ligand>
        <name>substrate</name>
    </ligand>
</feature>
<feature type="binding site" evidence="1">
    <location>
        <position position="199"/>
    </location>
    <ligand>
        <name>substrate</name>
    </ligand>
</feature>
<feature type="binding site" evidence="1">
    <location>
        <begin position="217"/>
        <end position="218"/>
    </location>
    <ligand>
        <name>substrate</name>
    </ligand>
</feature>
<feature type="binding site" evidence="1">
    <location>
        <begin position="227"/>
        <end position="228"/>
    </location>
    <ligand>
        <name>substrate</name>
    </ligand>
</feature>
<feature type="site" description="Could be important to modulate the pK values of the two catalytic cysteine residues" evidence="1">
    <location>
        <position position="165"/>
    </location>
</feature>
<feature type="site" description="Could be important to modulate the pK values of the two catalytic cysteine residues" evidence="1">
    <location>
        <position position="217"/>
    </location>
</feature>
<dbReference type="EC" id="5.1.1.7" evidence="1"/>
<dbReference type="EMBL" id="CP000325">
    <property type="protein sequence ID" value="ABL05549.1"/>
    <property type="molecule type" value="Genomic_DNA"/>
</dbReference>
<dbReference type="RefSeq" id="WP_011741157.1">
    <property type="nucleotide sequence ID" value="NC_008611.1"/>
</dbReference>
<dbReference type="SMR" id="A0PT80"/>
<dbReference type="KEGG" id="mul:MUL_3369"/>
<dbReference type="eggNOG" id="COG0253">
    <property type="taxonomic scope" value="Bacteria"/>
</dbReference>
<dbReference type="HOGENOM" id="CLU_053306_4_0_11"/>
<dbReference type="UniPathway" id="UPA00034">
    <property type="reaction ID" value="UER00025"/>
</dbReference>
<dbReference type="Proteomes" id="UP000000765">
    <property type="component" value="Chromosome"/>
</dbReference>
<dbReference type="GO" id="GO:0005829">
    <property type="term" value="C:cytosol"/>
    <property type="evidence" value="ECO:0007669"/>
    <property type="project" value="TreeGrafter"/>
</dbReference>
<dbReference type="GO" id="GO:0008837">
    <property type="term" value="F:diaminopimelate epimerase activity"/>
    <property type="evidence" value="ECO:0007669"/>
    <property type="project" value="UniProtKB-UniRule"/>
</dbReference>
<dbReference type="GO" id="GO:0009089">
    <property type="term" value="P:lysine biosynthetic process via diaminopimelate"/>
    <property type="evidence" value="ECO:0007669"/>
    <property type="project" value="UniProtKB-UniRule"/>
</dbReference>
<dbReference type="Gene3D" id="3.10.310.10">
    <property type="entry name" value="Diaminopimelate Epimerase, Chain A, domain 1"/>
    <property type="match status" value="2"/>
</dbReference>
<dbReference type="HAMAP" id="MF_00197">
    <property type="entry name" value="DAP_epimerase"/>
    <property type="match status" value="1"/>
</dbReference>
<dbReference type="InterPro" id="IPR018510">
    <property type="entry name" value="DAP_epimerase_AS"/>
</dbReference>
<dbReference type="InterPro" id="IPR001653">
    <property type="entry name" value="DAP_epimerase_DapF"/>
</dbReference>
<dbReference type="NCBIfam" id="TIGR00652">
    <property type="entry name" value="DapF"/>
    <property type="match status" value="1"/>
</dbReference>
<dbReference type="PANTHER" id="PTHR31689:SF0">
    <property type="entry name" value="DIAMINOPIMELATE EPIMERASE"/>
    <property type="match status" value="1"/>
</dbReference>
<dbReference type="PANTHER" id="PTHR31689">
    <property type="entry name" value="DIAMINOPIMELATE EPIMERASE, CHLOROPLASTIC"/>
    <property type="match status" value="1"/>
</dbReference>
<dbReference type="Pfam" id="PF01678">
    <property type="entry name" value="DAP_epimerase"/>
    <property type="match status" value="2"/>
</dbReference>
<dbReference type="SUPFAM" id="SSF54506">
    <property type="entry name" value="Diaminopimelate epimerase-like"/>
    <property type="match status" value="2"/>
</dbReference>
<dbReference type="PROSITE" id="PS01326">
    <property type="entry name" value="DAP_EPIMERASE"/>
    <property type="match status" value="1"/>
</dbReference>
<keyword id="KW-0028">Amino-acid biosynthesis</keyword>
<keyword id="KW-0963">Cytoplasm</keyword>
<keyword id="KW-0413">Isomerase</keyword>
<keyword id="KW-0457">Lysine biosynthesis</keyword>
<sequence>MIFAKGHGTQNDFVLLPDVAARLSLTAAQVAALCDRRRGLGADGILRVTTADAAVAAGVLHRLPDGVSPGDWYMDYRNADGSTAQMCGNGVRVFAHYLRASGLETRDEFVVGSLAGPRPVTVHHADQTHADVTVDMGKANKLGPGEAVVGGRRLSGVAVDVGNPHLACLDPGLTPEQLAALDVGAPVSFDHAQFPEGVNVEVLTARAAGVVCMRVHERGVGETRSCGTGTVAAAVAALASAGQETGTLTVRIPGGDVTVNITDATSLLRGPSVLVASGEISEEWWRDQRR</sequence>